<gene>
    <name type="ordered locus">SAR1163</name>
</gene>
<keyword id="KW-0186">Copper</keyword>
<keyword id="KW-0378">Hydrolase</keyword>
<keyword id="KW-0479">Metal-binding</keyword>
<keyword id="KW-0560">Oxidoreductase</keyword>
<keyword id="KW-0808">Transferase</keyword>
<keyword id="KW-0862">Zinc</keyword>
<comment type="function">
    <text evidence="2">Purine nucleoside enzyme that catalyzes the phosphorolysis of adenosine and inosine nucleosides, yielding D-ribose 1-phosphate and the respective free bases, adenine and hypoxanthine. Also catalyzes the phosphorolysis of S-methyl-5'-thioadenosine into adenine and S-methyl-5-thio-alpha-D-ribose 1-phosphate. Also has adenosine deaminase activity.</text>
</comment>
<comment type="catalytic activity">
    <reaction evidence="2">
        <text>adenosine + phosphate = alpha-D-ribose 1-phosphate + adenine</text>
        <dbReference type="Rhea" id="RHEA:27642"/>
        <dbReference type="ChEBI" id="CHEBI:16335"/>
        <dbReference type="ChEBI" id="CHEBI:16708"/>
        <dbReference type="ChEBI" id="CHEBI:43474"/>
        <dbReference type="ChEBI" id="CHEBI:57720"/>
        <dbReference type="EC" id="2.4.2.1"/>
    </reaction>
    <physiologicalReaction direction="left-to-right" evidence="2">
        <dbReference type="Rhea" id="RHEA:27643"/>
    </physiologicalReaction>
</comment>
<comment type="catalytic activity">
    <reaction evidence="2">
        <text>S-methyl-5'-thioadenosine + phosphate = 5-(methylsulfanyl)-alpha-D-ribose 1-phosphate + adenine</text>
        <dbReference type="Rhea" id="RHEA:11852"/>
        <dbReference type="ChEBI" id="CHEBI:16708"/>
        <dbReference type="ChEBI" id="CHEBI:17509"/>
        <dbReference type="ChEBI" id="CHEBI:43474"/>
        <dbReference type="ChEBI" id="CHEBI:58533"/>
        <dbReference type="EC" id="2.4.2.28"/>
    </reaction>
    <physiologicalReaction direction="left-to-right" evidence="2">
        <dbReference type="Rhea" id="RHEA:11853"/>
    </physiologicalReaction>
</comment>
<comment type="catalytic activity">
    <reaction evidence="2">
        <text>inosine + phosphate = alpha-D-ribose 1-phosphate + hypoxanthine</text>
        <dbReference type="Rhea" id="RHEA:27646"/>
        <dbReference type="ChEBI" id="CHEBI:17368"/>
        <dbReference type="ChEBI" id="CHEBI:17596"/>
        <dbReference type="ChEBI" id="CHEBI:43474"/>
        <dbReference type="ChEBI" id="CHEBI:57720"/>
        <dbReference type="EC" id="2.4.2.1"/>
    </reaction>
    <physiologicalReaction direction="left-to-right" evidence="2">
        <dbReference type="Rhea" id="RHEA:27647"/>
    </physiologicalReaction>
</comment>
<comment type="catalytic activity">
    <reaction evidence="2">
        <text>adenosine + H2O + H(+) = inosine + NH4(+)</text>
        <dbReference type="Rhea" id="RHEA:24408"/>
        <dbReference type="ChEBI" id="CHEBI:15377"/>
        <dbReference type="ChEBI" id="CHEBI:15378"/>
        <dbReference type="ChEBI" id="CHEBI:16335"/>
        <dbReference type="ChEBI" id="CHEBI:17596"/>
        <dbReference type="ChEBI" id="CHEBI:28938"/>
        <dbReference type="EC" id="3.5.4.4"/>
    </reaction>
    <physiologicalReaction direction="left-to-right" evidence="2">
        <dbReference type="Rhea" id="RHEA:24409"/>
    </physiologicalReaction>
</comment>
<comment type="cofactor">
    <cofactor evidence="1">
        <name>Cu(2+)</name>
        <dbReference type="ChEBI" id="CHEBI:29036"/>
    </cofactor>
    <cofactor evidence="2">
        <name>Zn(2+)</name>
        <dbReference type="ChEBI" id="CHEBI:29105"/>
    </cofactor>
</comment>
<comment type="subunit">
    <text evidence="3">Homodimer.</text>
</comment>
<comment type="similarity">
    <text evidence="4">Belongs to the purine nucleoside phosphorylase YfiH/LACC1 family.</text>
</comment>
<dbReference type="EC" id="2.4.2.1" evidence="2"/>
<dbReference type="EC" id="3.5.4.4" evidence="2"/>
<dbReference type="EC" id="2.4.2.28" evidence="2"/>
<dbReference type="EMBL" id="BX571856">
    <property type="protein sequence ID" value="CAG40165.1"/>
    <property type="molecule type" value="Genomic_DNA"/>
</dbReference>
<dbReference type="SMR" id="Q6GHP8"/>
<dbReference type="KEGG" id="sar:SAR1163"/>
<dbReference type="HOGENOM" id="CLU_065784_0_0_9"/>
<dbReference type="Proteomes" id="UP000000596">
    <property type="component" value="Chromosome"/>
</dbReference>
<dbReference type="GO" id="GO:0004000">
    <property type="term" value="F:adenosine deaminase activity"/>
    <property type="evidence" value="ECO:0007669"/>
    <property type="project" value="RHEA"/>
</dbReference>
<dbReference type="GO" id="GO:0005507">
    <property type="term" value="F:copper ion binding"/>
    <property type="evidence" value="ECO:0007669"/>
    <property type="project" value="TreeGrafter"/>
</dbReference>
<dbReference type="GO" id="GO:0016491">
    <property type="term" value="F:oxidoreductase activity"/>
    <property type="evidence" value="ECO:0007669"/>
    <property type="project" value="UniProtKB-KW"/>
</dbReference>
<dbReference type="GO" id="GO:0017061">
    <property type="term" value="F:S-methyl-5-thioadenosine phosphorylase activity"/>
    <property type="evidence" value="ECO:0007669"/>
    <property type="project" value="UniProtKB-EC"/>
</dbReference>
<dbReference type="CDD" id="cd16833">
    <property type="entry name" value="YfiH"/>
    <property type="match status" value="1"/>
</dbReference>
<dbReference type="Gene3D" id="3.60.140.10">
    <property type="entry name" value="CNF1/YfiH-like putative cysteine hydrolases"/>
    <property type="match status" value="1"/>
</dbReference>
<dbReference type="InterPro" id="IPR003730">
    <property type="entry name" value="Cu_polyphenol_OxRdtase"/>
</dbReference>
<dbReference type="InterPro" id="IPR038371">
    <property type="entry name" value="Cu_polyphenol_OxRdtase_sf"/>
</dbReference>
<dbReference type="InterPro" id="IPR011324">
    <property type="entry name" value="Cytotoxic_necrot_fac-like_cat"/>
</dbReference>
<dbReference type="NCBIfam" id="TIGR00726">
    <property type="entry name" value="peptidoglycan editing factor PgeF"/>
    <property type="match status" value="1"/>
</dbReference>
<dbReference type="PANTHER" id="PTHR30616:SF2">
    <property type="entry name" value="PURINE NUCLEOSIDE PHOSPHORYLASE LACC1"/>
    <property type="match status" value="1"/>
</dbReference>
<dbReference type="PANTHER" id="PTHR30616">
    <property type="entry name" value="UNCHARACTERIZED PROTEIN YFIH"/>
    <property type="match status" value="1"/>
</dbReference>
<dbReference type="Pfam" id="PF02578">
    <property type="entry name" value="Cu-oxidase_4"/>
    <property type="match status" value="1"/>
</dbReference>
<dbReference type="SUPFAM" id="SSF64438">
    <property type="entry name" value="CNF1/YfiH-like putative cysteine hydrolases"/>
    <property type="match status" value="1"/>
</dbReference>
<feature type="chain" id="PRO_0000163174" description="Purine nucleoside phosphorylase SAR1163">
    <location>
        <begin position="1"/>
        <end position="263"/>
    </location>
</feature>
<feature type="binding site" evidence="2">
    <location>
        <position position="79"/>
    </location>
    <ligand>
        <name>Zn(2+)</name>
        <dbReference type="ChEBI" id="CHEBI:29105"/>
        <note>catalytic</note>
    </ligand>
</feature>
<feature type="binding site" evidence="2">
    <location>
        <position position="124"/>
    </location>
    <ligand>
        <name>Zn(2+)</name>
        <dbReference type="ChEBI" id="CHEBI:29105"/>
        <note>catalytic</note>
    </ligand>
</feature>
<feature type="binding site" evidence="2">
    <location>
        <position position="141"/>
    </location>
    <ligand>
        <name>Zn(2+)</name>
        <dbReference type="ChEBI" id="CHEBI:29105"/>
        <note>catalytic</note>
    </ligand>
</feature>
<evidence type="ECO:0000250" key="1">
    <source>
        <dbReference type="UniProtKB" id="P33644"/>
    </source>
</evidence>
<evidence type="ECO:0000250" key="2">
    <source>
        <dbReference type="UniProtKB" id="P84138"/>
    </source>
</evidence>
<evidence type="ECO:0000250" key="3">
    <source>
        <dbReference type="UniProtKB" id="Q1EIR0"/>
    </source>
</evidence>
<evidence type="ECO:0000305" key="4"/>
<reference key="1">
    <citation type="journal article" date="2004" name="Proc. Natl. Acad. Sci. U.S.A.">
        <title>Complete genomes of two clinical Staphylococcus aureus strains: evidence for the rapid evolution of virulence and drug resistance.</title>
        <authorList>
            <person name="Holden M.T.G."/>
            <person name="Feil E.J."/>
            <person name="Lindsay J.A."/>
            <person name="Peacock S.J."/>
            <person name="Day N.P.J."/>
            <person name="Enright M.C."/>
            <person name="Foster T.J."/>
            <person name="Moore C.E."/>
            <person name="Hurst L."/>
            <person name="Atkin R."/>
            <person name="Barron A."/>
            <person name="Bason N."/>
            <person name="Bentley S.D."/>
            <person name="Chillingworth C."/>
            <person name="Chillingworth T."/>
            <person name="Churcher C."/>
            <person name="Clark L."/>
            <person name="Corton C."/>
            <person name="Cronin A."/>
            <person name="Doggett J."/>
            <person name="Dowd L."/>
            <person name="Feltwell T."/>
            <person name="Hance Z."/>
            <person name="Harris B."/>
            <person name="Hauser H."/>
            <person name="Holroyd S."/>
            <person name="Jagels K."/>
            <person name="James K.D."/>
            <person name="Lennard N."/>
            <person name="Line A."/>
            <person name="Mayes R."/>
            <person name="Moule S."/>
            <person name="Mungall K."/>
            <person name="Ormond D."/>
            <person name="Quail M.A."/>
            <person name="Rabbinowitsch E."/>
            <person name="Rutherford K.M."/>
            <person name="Sanders M."/>
            <person name="Sharp S."/>
            <person name="Simmonds M."/>
            <person name="Stevens K."/>
            <person name="Whitehead S."/>
            <person name="Barrell B.G."/>
            <person name="Spratt B.G."/>
            <person name="Parkhill J."/>
        </authorList>
    </citation>
    <scope>NUCLEOTIDE SEQUENCE [LARGE SCALE GENOMIC DNA]</scope>
    <source>
        <strain>MRSA252</strain>
    </source>
</reference>
<accession>Q6GHP8</accession>
<protein>
    <recommendedName>
        <fullName>Purine nucleoside phosphorylase SAR1163</fullName>
        <ecNumber evidence="2">2.4.2.1</ecNumber>
    </recommendedName>
    <alternativeName>
        <fullName>Adenosine deaminase SAR1163</fullName>
        <ecNumber evidence="2">3.5.4.4</ecNumber>
    </alternativeName>
    <alternativeName>
        <fullName>S-methyl-5'-thioadenosine phosphorylase SAR1163</fullName>
        <ecNumber evidence="2">2.4.2.28</ecNumber>
    </alternativeName>
</protein>
<sequence>MNDNFKKQPHHLIYEELLQQGITLGITTRGDGLSDYPKNAFNMARYIDDCPYNITQHQLQLAEEIAFDRKNWVFPIQTHENKVACITKDDIGTNIDTLTDALHGIDAMYTYDSNVLLTMCYADCVPVYFYSTKHHFIALAHAGWRGTYTEIVKEVLKHVNFDLKDLHVVIGPSTSSSYEINDDIKNKFETLPIDSANYIETRGRDRHGIDLKKANAALLNNYGVPKENIYTTAYATSEHLELFFSYRLEKGQTGRMLAFIGQQ</sequence>
<name>PURNU_STAAR</name>
<organism>
    <name type="scientific">Staphylococcus aureus (strain MRSA252)</name>
    <dbReference type="NCBI Taxonomy" id="282458"/>
    <lineage>
        <taxon>Bacteria</taxon>
        <taxon>Bacillati</taxon>
        <taxon>Bacillota</taxon>
        <taxon>Bacilli</taxon>
        <taxon>Bacillales</taxon>
        <taxon>Staphylococcaceae</taxon>
        <taxon>Staphylococcus</taxon>
    </lineage>
</organism>
<proteinExistence type="inferred from homology"/>